<sequence length="423" mass="48494">MKKSKRKNAQAQEAQETEVLVQEEAEELPEFPEGEPDPDLEDPDLALEDDLLDLPEEGEGLDLEEEEEDLPIPKISTSDPVRQYLHEIGQVPLLTLEEEVELARKVEEGMEAIKKLSEITGLDPDLIREVVRAKILGSARVRHIPGLKETLDPKTVEEIDQKLKSLPKEHKRYLHIAREGEAARQHLIEANLRLVVSIAKKYTGRGLSFLDLIQEGNQGLIRAVEKFEYKRRFKFSTYATWWIRQAINRAIADQARTIRIPVHMVETINKLSRTARQLQQELGREPTYEEIAEAMGPGWDAKRVEETLKIAQEPVSLETPIGDEKDSFYGDFIPDEHLPSPVDAATQSLLSEELEKALSKLSEREAMVLKLRKGLIDGREHTLEEVGAFFGVTRERIRQIENKALRKLKYHESRTRKLRDFLD</sequence>
<reference key="1">
    <citation type="journal article" date="1999" name="FEMS Microbiol. Lett.">
        <title>Cloning and characterization in Escherichia coli of the gene encoding the principal sigma factor of an extreme thermophile, Thermus thermophilus.</title>
        <authorList>
            <person name="Nishiyama M."/>
            <person name="Kobashi N."/>
            <person name="Tanaka K."/>
            <person name="Takahashi H."/>
            <person name="Tanokura M."/>
        </authorList>
    </citation>
    <scope>NUCLEOTIDE SEQUENCE [GENOMIC DNA]</scope>
    <scope>PROTEIN SEQUENCE OF 1-10</scope>
    <scope>GENE NAME</scope>
    <source>
        <strain>ATCC BAA-163 / DSM 7039 / HB27</strain>
    </source>
</reference>
<reference key="2">
    <citation type="journal article" date="2004" name="Nat. Biotechnol.">
        <title>The genome sequence of the extreme thermophile Thermus thermophilus.</title>
        <authorList>
            <person name="Henne A."/>
            <person name="Brueggemann H."/>
            <person name="Raasch C."/>
            <person name="Wiezer A."/>
            <person name="Hartsch T."/>
            <person name="Liesegang H."/>
            <person name="Johann A."/>
            <person name="Lienard T."/>
            <person name="Gohl O."/>
            <person name="Martinez-Arias R."/>
            <person name="Jacobi C."/>
            <person name="Starkuviene V."/>
            <person name="Schlenczeck S."/>
            <person name="Dencker S."/>
            <person name="Huber R."/>
            <person name="Klenk H.-P."/>
            <person name="Kramer W."/>
            <person name="Merkl R."/>
            <person name="Gottschalk G."/>
            <person name="Fritz H.-J."/>
        </authorList>
    </citation>
    <scope>NUCLEOTIDE SEQUENCE [LARGE SCALE GENOMIC DNA]</scope>
    <source>
        <strain>ATCC BAA-163 / DSM 7039 / HB27</strain>
    </source>
</reference>
<reference key="3">
    <citation type="journal article" date="2002" name="Nature">
        <title>Crystal structure of a bacterial RNA polymerase holoenzyme at 2.6 A resolution.</title>
        <authorList>
            <person name="Vassylyev D.G."/>
            <person name="Sekine S."/>
            <person name="Laptenko O."/>
            <person name="Lee J."/>
            <person name="Vassylyeva M.N."/>
            <person name="Borukhov S."/>
            <person name="Yokoyama S."/>
        </authorList>
    </citation>
    <scope>X-RAY CRYSTALLOGRAPHY (2.60 ANGSTROMS) IN COMPLEX WITH RPOA; RPOB; RPOC AND RPOZ</scope>
    <scope>DOMAIN</scope>
    <scope>MOTIF</scope>
    <scope>SUBUNIT</scope>
</reference>
<reference key="4">
    <citation type="journal article" date="2004" name="Cell">
        <title>Structural basis for transcription regulation by alarmone ppGpp.</title>
        <authorList>
            <person name="Artsimovitch I."/>
            <person name="Patlan V."/>
            <person name="Sekine S."/>
            <person name="Vassylyeva M.N."/>
            <person name="Hosaka T."/>
            <person name="Ochi K."/>
            <person name="Yokoyama S."/>
            <person name="Vassylyev D.G."/>
        </authorList>
    </citation>
    <scope>X-RAY CRYSTALLOGRAPHY (2.70 ANGSTROMS) IN COMPLEX WITH RPOA; RPOB; RPOC AND RPOZ</scope>
    <scope>SUBUNIT</scope>
</reference>
<protein>
    <recommendedName>
        <fullName evidence="2">RNA polymerase sigma factor SigA</fullName>
    </recommendedName>
</protein>
<evidence type="ECO:0000250" key="1"/>
<evidence type="ECO:0000255" key="2">
    <source>
        <dbReference type="HAMAP-Rule" id="MF_00963"/>
    </source>
</evidence>
<evidence type="ECO:0000256" key="3">
    <source>
        <dbReference type="SAM" id="MobiDB-lite"/>
    </source>
</evidence>
<evidence type="ECO:0000269" key="4">
    <source>
    </source>
</evidence>
<evidence type="ECO:0000269" key="5">
    <source>
    </source>
</evidence>
<evidence type="ECO:0007829" key="6">
    <source>
        <dbReference type="PDB" id="1IW7"/>
    </source>
</evidence>
<evidence type="ECO:0007829" key="7">
    <source>
        <dbReference type="PDB" id="1SMY"/>
    </source>
</evidence>
<gene>
    <name evidence="2" type="primary">sigA</name>
    <name type="synonym">rpoD</name>
    <name type="ordered locus">TT_C0164</name>
</gene>
<comment type="function">
    <text evidence="2">Sigma factors are initiation factors that promote the attachment of RNA polymerase to specific initiation sites and are then released. This sigma factor is the primary sigma factor during exponential growth.</text>
</comment>
<comment type="subunit">
    <text evidence="2 4 5">Interacts transiently with the RNA polymerase catalytic core formed by RpoA, RpoB, RpoC and RpoZ (2 alpha, 1 beta, 1 beta' and 1 omega subunit) to form the RNA polymerase holoenzyme that can initiate transcription.</text>
</comment>
<comment type="subcellular location">
    <subcellularLocation>
        <location evidence="2">Cytoplasm</location>
    </subcellularLocation>
</comment>
<comment type="domain">
    <text evidence="4">Contains 4 domains, connected by flexible linkers. In the active conformation, the domains are in an extended conformation, each making extensive interactions with the RNA polymerase catalytic core (PubMed:12000971).</text>
</comment>
<comment type="domain">
    <text evidence="1">In the autoinhibited state, sigma-70 factor domain-1 packs closely together with sigma-70 factor domains-2 and -4, contrary to the extended conformation that is seen when the protein is part of the RNA polymerase holoenzyme.</text>
</comment>
<comment type="domain">
    <text evidence="1 4">The sigma-70 factor domain-2 mediates sequence-specific interaction with the -10 element in promoter DNA, and plays an important role in melting the double-stranded DNA and the formation of the transcription bubble (By similarity). The sigma-70 factor domain-2 mediates interaction with the RNA polymerase subunits RpoB and RpoC (PubMed:12000971).</text>
</comment>
<comment type="domain">
    <text evidence="1">The sigma-70 factor domain-4 contains a helix-turn-helix (H-T-H) motif that mediates interaction with the -35 element in promoter DNA. The domain also mediates interaction with the RNA polymerase subunit RpoA. Interactions between sigma-70 factor domain-4 and anti-sigma factors prevents interaction of sigma factors with the RNA polymerase catalytic core (By similarity).</text>
</comment>
<comment type="similarity">
    <text evidence="2">Belongs to the sigma-70 factor family. RpoD/SigA subfamily.</text>
</comment>
<accession>Q72L95</accession>
<accession>Q9WX78</accession>
<organism>
    <name type="scientific">Thermus thermophilus (strain ATCC BAA-163 / DSM 7039 / HB27)</name>
    <dbReference type="NCBI Taxonomy" id="262724"/>
    <lineage>
        <taxon>Bacteria</taxon>
        <taxon>Thermotogati</taxon>
        <taxon>Deinococcota</taxon>
        <taxon>Deinococci</taxon>
        <taxon>Thermales</taxon>
        <taxon>Thermaceae</taxon>
        <taxon>Thermus</taxon>
    </lineage>
</organism>
<name>SIGA_THET2</name>
<feature type="chain" id="PRO_0000423012" description="RNA polymerase sigma factor SigA">
    <location>
        <begin position="1"/>
        <end position="423"/>
    </location>
</feature>
<feature type="DNA-binding region" description="H-T-H motif" evidence="2">
    <location>
        <begin position="383"/>
        <end position="402"/>
    </location>
</feature>
<feature type="region of interest" description="Disordered" evidence="3">
    <location>
        <begin position="1"/>
        <end position="76"/>
    </location>
</feature>
<feature type="region of interest" description="Sigma-70 factor domain-1">
    <location>
        <begin position="78"/>
        <end position="113"/>
    </location>
</feature>
<feature type="region of interest" description="Sigma-70 factor domain-2">
    <location>
        <begin position="187"/>
        <end position="257"/>
    </location>
</feature>
<feature type="region of interest" description="Sigma-70 factor domain-3">
    <location>
        <begin position="266"/>
        <end position="344"/>
    </location>
</feature>
<feature type="region of interest" description="Sigma-70 factor domain-4">
    <location>
        <begin position="357"/>
        <end position="409"/>
    </location>
</feature>
<feature type="short sequence motif" description="Interaction with polymerase core subunit RpoC">
    <location>
        <begin position="211"/>
        <end position="214"/>
    </location>
</feature>
<feature type="compositionally biased region" description="Acidic residues" evidence="3">
    <location>
        <begin position="21"/>
        <end position="70"/>
    </location>
</feature>
<feature type="helix" evidence="6">
    <location>
        <begin position="78"/>
        <end position="90"/>
    </location>
</feature>
<feature type="helix" evidence="6">
    <location>
        <begin position="97"/>
        <end position="120"/>
    </location>
</feature>
<feature type="helix" evidence="6">
    <location>
        <begin position="124"/>
        <end position="136"/>
    </location>
</feature>
<feature type="helix" evidence="6">
    <location>
        <begin position="139"/>
        <end position="143"/>
    </location>
</feature>
<feature type="strand" evidence="6">
    <location>
        <begin position="144"/>
        <end position="146"/>
    </location>
</feature>
<feature type="strand" evidence="6">
    <location>
        <begin position="148"/>
        <end position="150"/>
    </location>
</feature>
<feature type="helix" evidence="6">
    <location>
        <begin position="154"/>
        <end position="165"/>
    </location>
</feature>
<feature type="helix" evidence="6">
    <location>
        <begin position="168"/>
        <end position="190"/>
    </location>
</feature>
<feature type="helix" evidence="6">
    <location>
        <begin position="192"/>
        <end position="199"/>
    </location>
</feature>
<feature type="helix" evidence="6">
    <location>
        <begin position="203"/>
        <end position="205"/>
    </location>
</feature>
<feature type="helix" evidence="6">
    <location>
        <begin position="209"/>
        <end position="226"/>
    </location>
</feature>
<feature type="helix" evidence="6">
    <location>
        <begin position="235"/>
        <end position="253"/>
    </location>
</feature>
<feature type="strand" evidence="6">
    <location>
        <begin position="255"/>
        <end position="258"/>
    </location>
</feature>
<feature type="helix" evidence="6">
    <location>
        <begin position="262"/>
        <end position="278"/>
    </location>
</feature>
<feature type="turn" evidence="6">
    <location>
        <begin position="279"/>
        <end position="281"/>
    </location>
</feature>
<feature type="strand" evidence="6">
    <location>
        <begin position="282"/>
        <end position="284"/>
    </location>
</feature>
<feature type="helix" evidence="6">
    <location>
        <begin position="289"/>
        <end position="295"/>
    </location>
</feature>
<feature type="helix" evidence="6">
    <location>
        <begin position="301"/>
        <end position="311"/>
    </location>
</feature>
<feature type="strand" evidence="6">
    <location>
        <begin position="315"/>
        <end position="318"/>
    </location>
</feature>
<feature type="turn" evidence="6">
    <location>
        <begin position="322"/>
        <end position="324"/>
    </location>
</feature>
<feature type="strand" evidence="6">
    <location>
        <begin position="325"/>
        <end position="328"/>
    </location>
</feature>
<feature type="helix" evidence="6">
    <location>
        <begin position="329"/>
        <end position="331"/>
    </location>
</feature>
<feature type="strand" evidence="6">
    <location>
        <begin position="336"/>
        <end position="338"/>
    </location>
</feature>
<feature type="helix" evidence="6">
    <location>
        <begin position="342"/>
        <end position="359"/>
    </location>
</feature>
<feature type="helix" evidence="6">
    <location>
        <begin position="363"/>
        <end position="374"/>
    </location>
</feature>
<feature type="helix" evidence="6">
    <location>
        <begin position="385"/>
        <end position="388"/>
    </location>
</feature>
<feature type="strand" evidence="6">
    <location>
        <begin position="389"/>
        <end position="392"/>
    </location>
</feature>
<feature type="helix" evidence="6">
    <location>
        <begin position="394"/>
        <end position="414"/>
    </location>
</feature>
<feature type="strand" evidence="7">
    <location>
        <begin position="417"/>
        <end position="420"/>
    </location>
</feature>
<keyword id="KW-0002">3D-structure</keyword>
<keyword id="KW-0963">Cytoplasm</keyword>
<keyword id="KW-0903">Direct protein sequencing</keyword>
<keyword id="KW-0238">DNA-binding</keyword>
<keyword id="KW-0731">Sigma factor</keyword>
<keyword id="KW-0804">Transcription</keyword>
<keyword id="KW-0805">Transcription regulation</keyword>
<proteinExistence type="evidence at protein level"/>
<dbReference type="EMBL" id="AB017014">
    <property type="protein sequence ID" value="BAA74758.1"/>
    <property type="molecule type" value="Genomic_DNA"/>
</dbReference>
<dbReference type="EMBL" id="AE017221">
    <property type="protein sequence ID" value="AAS80512.1"/>
    <property type="molecule type" value="Genomic_DNA"/>
</dbReference>
<dbReference type="RefSeq" id="WP_011172619.1">
    <property type="nucleotide sequence ID" value="NC_005835.1"/>
</dbReference>
<dbReference type="PDB" id="1IW7">
    <property type="method" value="X-ray"/>
    <property type="resolution" value="2.60 A"/>
    <property type="chains" value="F/P=1-423"/>
</dbReference>
<dbReference type="PDB" id="1SMY">
    <property type="method" value="X-ray"/>
    <property type="resolution" value="2.70 A"/>
    <property type="chains" value="F/P=1-423"/>
</dbReference>
<dbReference type="PDBsum" id="1IW7"/>
<dbReference type="PDBsum" id="1SMY"/>
<dbReference type="SMR" id="Q72L95"/>
<dbReference type="KEGG" id="tth:TT_C0164"/>
<dbReference type="eggNOG" id="COG0568">
    <property type="taxonomic scope" value="Bacteria"/>
</dbReference>
<dbReference type="HOGENOM" id="CLU_014793_3_3_0"/>
<dbReference type="OrthoDB" id="9809557at2"/>
<dbReference type="EvolutionaryTrace" id="Q72L95"/>
<dbReference type="Proteomes" id="UP000000592">
    <property type="component" value="Chromosome"/>
</dbReference>
<dbReference type="GO" id="GO:0005737">
    <property type="term" value="C:cytoplasm"/>
    <property type="evidence" value="ECO:0007669"/>
    <property type="project" value="UniProtKB-SubCell"/>
</dbReference>
<dbReference type="GO" id="GO:0003677">
    <property type="term" value="F:DNA binding"/>
    <property type="evidence" value="ECO:0007669"/>
    <property type="project" value="UniProtKB-UniRule"/>
</dbReference>
<dbReference type="GO" id="GO:0016987">
    <property type="term" value="F:sigma factor activity"/>
    <property type="evidence" value="ECO:0007669"/>
    <property type="project" value="UniProtKB-UniRule"/>
</dbReference>
<dbReference type="GO" id="GO:0006352">
    <property type="term" value="P:DNA-templated transcription initiation"/>
    <property type="evidence" value="ECO:0007669"/>
    <property type="project" value="UniProtKB-UniRule"/>
</dbReference>
<dbReference type="CDD" id="cd06171">
    <property type="entry name" value="Sigma70_r4"/>
    <property type="match status" value="1"/>
</dbReference>
<dbReference type="FunFam" id="1.10.601.10:FF:000001">
    <property type="entry name" value="RNA polymerase sigma factor SigA"/>
    <property type="match status" value="1"/>
</dbReference>
<dbReference type="Gene3D" id="1.20.120.1810">
    <property type="match status" value="1"/>
</dbReference>
<dbReference type="Gene3D" id="1.10.10.10">
    <property type="entry name" value="Winged helix-like DNA-binding domain superfamily/Winged helix DNA-binding domain"/>
    <property type="match status" value="2"/>
</dbReference>
<dbReference type="HAMAP" id="MF_00963">
    <property type="entry name" value="Sigma70_RpoD_SigA"/>
    <property type="match status" value="1"/>
</dbReference>
<dbReference type="InterPro" id="IPR014284">
    <property type="entry name" value="RNA_pol_sigma-70_dom"/>
</dbReference>
<dbReference type="InterPro" id="IPR000943">
    <property type="entry name" value="RNA_pol_sigma70"/>
</dbReference>
<dbReference type="InterPro" id="IPR009042">
    <property type="entry name" value="RNA_pol_sigma70_r1_2"/>
</dbReference>
<dbReference type="InterPro" id="IPR007627">
    <property type="entry name" value="RNA_pol_sigma70_r2"/>
</dbReference>
<dbReference type="InterPro" id="IPR007624">
    <property type="entry name" value="RNA_pol_sigma70_r3"/>
</dbReference>
<dbReference type="InterPro" id="IPR007630">
    <property type="entry name" value="RNA_pol_sigma70_r4"/>
</dbReference>
<dbReference type="InterPro" id="IPR013325">
    <property type="entry name" value="RNA_pol_sigma_r2"/>
</dbReference>
<dbReference type="InterPro" id="IPR013324">
    <property type="entry name" value="RNA_pol_sigma_r3/r4-like"/>
</dbReference>
<dbReference type="InterPro" id="IPR012760">
    <property type="entry name" value="RNA_pol_sigma_RpoD_C"/>
</dbReference>
<dbReference type="InterPro" id="IPR050239">
    <property type="entry name" value="Sigma-70_RNA_pol_init_factors"/>
</dbReference>
<dbReference type="InterPro" id="IPR028630">
    <property type="entry name" value="Sigma70_RpoD"/>
</dbReference>
<dbReference type="InterPro" id="IPR036388">
    <property type="entry name" value="WH-like_DNA-bd_sf"/>
</dbReference>
<dbReference type="NCBIfam" id="TIGR02393">
    <property type="entry name" value="RpoD_Cterm"/>
    <property type="match status" value="1"/>
</dbReference>
<dbReference type="NCBIfam" id="TIGR02937">
    <property type="entry name" value="sigma70-ECF"/>
    <property type="match status" value="1"/>
</dbReference>
<dbReference type="PANTHER" id="PTHR30603">
    <property type="entry name" value="RNA POLYMERASE SIGMA FACTOR RPO"/>
    <property type="match status" value="1"/>
</dbReference>
<dbReference type="PANTHER" id="PTHR30603:SF60">
    <property type="entry name" value="RNA POLYMERASE SIGMA FACTOR RPOD"/>
    <property type="match status" value="1"/>
</dbReference>
<dbReference type="Pfam" id="PF00140">
    <property type="entry name" value="Sigma70_r1_2"/>
    <property type="match status" value="1"/>
</dbReference>
<dbReference type="Pfam" id="PF04542">
    <property type="entry name" value="Sigma70_r2"/>
    <property type="match status" value="1"/>
</dbReference>
<dbReference type="Pfam" id="PF04539">
    <property type="entry name" value="Sigma70_r3"/>
    <property type="match status" value="1"/>
</dbReference>
<dbReference type="Pfam" id="PF04545">
    <property type="entry name" value="Sigma70_r4"/>
    <property type="match status" value="1"/>
</dbReference>
<dbReference type="PRINTS" id="PR00046">
    <property type="entry name" value="SIGMA70FCT"/>
</dbReference>
<dbReference type="SUPFAM" id="SSF88946">
    <property type="entry name" value="Sigma2 domain of RNA polymerase sigma factors"/>
    <property type="match status" value="1"/>
</dbReference>
<dbReference type="SUPFAM" id="SSF88659">
    <property type="entry name" value="Sigma3 and sigma4 domains of RNA polymerase sigma factors"/>
    <property type="match status" value="2"/>
</dbReference>
<dbReference type="PROSITE" id="PS00716">
    <property type="entry name" value="SIGMA70_2"/>
    <property type="match status" value="1"/>
</dbReference>